<accession>P05976</accession>
<accession>B2R4N6</accession>
<accession>B2R4T6</accession>
<accession>P06741</accession>
<accession>Q6IBD5</accession>
<keyword id="KW-0007">Acetylation</keyword>
<keyword id="KW-0025">Alternative splicing</keyword>
<keyword id="KW-0225">Disease variant</keyword>
<keyword id="KW-0488">Methylation</keyword>
<keyword id="KW-0505">Motor protein</keyword>
<keyword id="KW-0514">Muscle protein</keyword>
<keyword id="KW-0518">Myosin</keyword>
<keyword id="KW-0597">Phosphoprotein</keyword>
<keyword id="KW-1267">Proteomics identification</keyword>
<keyword id="KW-1185">Reference proteome</keyword>
<keyword id="KW-0677">Repeat</keyword>
<gene>
    <name type="primary">MYL1</name>
</gene>
<comment type="function">
    <text evidence="6">Non-regulatory myosin light chain required for proper formation and/or maintenance of myofibers, and thus appropriate muscle function.</text>
</comment>
<comment type="subunit">
    <text evidence="11">Myosin is a hexamer of 2 heavy chains and 4 light chains. Does not bind calcium.</text>
</comment>
<comment type="alternative products">
    <event type="alternative splicing"/>
    <isoform>
        <id>P05976-1</id>
        <name>MLC1</name>
        <sequence type="displayed"/>
    </isoform>
    <isoform>
        <id>P05976-2</id>
        <id>P06741-1</id>
        <name>MLC3</name>
        <sequence type="described" ref="VSP_038686"/>
    </isoform>
</comment>
<comment type="PTM">
    <molecule>Isoform MLC3</molecule>
    <text evidence="1">Acetylated at position 2.</text>
</comment>
<comment type="disease" evidence="6">
    <disease id="DI-05562">
        <name>Congenital myopathy 14</name>
        <acronym>CMYO14</acronym>
        <description>An autosomal recessive congenital myopathy characterized by decreased fetal movements, severe muscle weakness and respiratory failure. Additional features include delayed motor development, areflexia, facial weakness, normal eye movements, head lag, and mild contractures. Skeletal muscle biopsy shows variation in fiber size with atrophy of the fast-twitch type II fibers.</description>
        <dbReference type="MIM" id="618414"/>
    </disease>
    <text>The disease is caused by variants affecting the gene represented in this entry.</text>
</comment>
<organism>
    <name type="scientific">Homo sapiens</name>
    <name type="common">Human</name>
    <dbReference type="NCBI Taxonomy" id="9606"/>
    <lineage>
        <taxon>Eukaryota</taxon>
        <taxon>Metazoa</taxon>
        <taxon>Chordata</taxon>
        <taxon>Craniata</taxon>
        <taxon>Vertebrata</taxon>
        <taxon>Euteleostomi</taxon>
        <taxon>Mammalia</taxon>
        <taxon>Eutheria</taxon>
        <taxon>Euarchontoglires</taxon>
        <taxon>Primates</taxon>
        <taxon>Haplorrhini</taxon>
        <taxon>Catarrhini</taxon>
        <taxon>Hominidae</taxon>
        <taxon>Homo</taxon>
    </lineage>
</organism>
<reference key="1">
    <citation type="journal article" date="1987" name="Nucleic Acids Res.">
        <title>The complete nucleotide sequences of cDNA clones coding for human myosin light chains 1 and 3.</title>
        <authorList>
            <person name="Seidel U."/>
            <person name="Bober E."/>
            <person name="Winter B."/>
            <person name="Lenz S."/>
            <person name="Lohse P."/>
            <person name="Arnold H.H."/>
        </authorList>
    </citation>
    <scope>NUCLEOTIDE SEQUENCE [MRNA] (ISOFORMS MLC1 AND MLC3)</scope>
    <source>
        <tissue>Fetal muscle</tissue>
    </source>
</reference>
<reference key="2">
    <citation type="journal article" date="1988" name="Gene">
        <title>Alkali myosin light chains in man are encoded by a multigene family that includes the adult skeletal muscle, the embryonic or atrial, and nonsarcomeric isoforms.</title>
        <authorList>
            <person name="Seidel U."/>
            <person name="Bober E."/>
            <person name="Winter B."/>
            <person name="Lenz S."/>
            <person name="Lohse P."/>
            <person name="Goedde H."/>
            <person name="Grzeschik K."/>
            <person name="Arnold H.H."/>
        </authorList>
    </citation>
    <scope>NUCLEOTIDE SEQUENCE [MRNA] (ISOFORMS MLC1 AND MLC3)</scope>
</reference>
<reference key="3">
    <citation type="submission" date="2004-06" db="EMBL/GenBank/DDBJ databases">
        <title>Cloning of human full open reading frames in Gateway(TM) system entry vector (pDONR201).</title>
        <authorList>
            <person name="Ebert L."/>
            <person name="Schick M."/>
            <person name="Neubert P."/>
            <person name="Schatten R."/>
            <person name="Henze S."/>
            <person name="Korn B."/>
        </authorList>
    </citation>
    <scope>NUCLEOTIDE SEQUENCE [LARGE SCALE MRNA] (ISOFORM MLC1)</scope>
</reference>
<reference key="4">
    <citation type="journal article" date="2004" name="Nat. Genet.">
        <title>Complete sequencing and characterization of 21,243 full-length human cDNAs.</title>
        <authorList>
            <person name="Ota T."/>
            <person name="Suzuki Y."/>
            <person name="Nishikawa T."/>
            <person name="Otsuki T."/>
            <person name="Sugiyama T."/>
            <person name="Irie R."/>
            <person name="Wakamatsu A."/>
            <person name="Hayashi K."/>
            <person name="Sato H."/>
            <person name="Nagai K."/>
            <person name="Kimura K."/>
            <person name="Makita H."/>
            <person name="Sekine M."/>
            <person name="Obayashi M."/>
            <person name="Nishi T."/>
            <person name="Shibahara T."/>
            <person name="Tanaka T."/>
            <person name="Ishii S."/>
            <person name="Yamamoto J."/>
            <person name="Saito K."/>
            <person name="Kawai Y."/>
            <person name="Isono Y."/>
            <person name="Nakamura Y."/>
            <person name="Nagahari K."/>
            <person name="Murakami K."/>
            <person name="Yasuda T."/>
            <person name="Iwayanagi T."/>
            <person name="Wagatsuma M."/>
            <person name="Shiratori A."/>
            <person name="Sudo H."/>
            <person name="Hosoiri T."/>
            <person name="Kaku Y."/>
            <person name="Kodaira H."/>
            <person name="Kondo H."/>
            <person name="Sugawara M."/>
            <person name="Takahashi M."/>
            <person name="Kanda K."/>
            <person name="Yokoi T."/>
            <person name="Furuya T."/>
            <person name="Kikkawa E."/>
            <person name="Omura Y."/>
            <person name="Abe K."/>
            <person name="Kamihara K."/>
            <person name="Katsuta N."/>
            <person name="Sato K."/>
            <person name="Tanikawa M."/>
            <person name="Yamazaki M."/>
            <person name="Ninomiya K."/>
            <person name="Ishibashi T."/>
            <person name="Yamashita H."/>
            <person name="Murakawa K."/>
            <person name="Fujimori K."/>
            <person name="Tanai H."/>
            <person name="Kimata M."/>
            <person name="Watanabe M."/>
            <person name="Hiraoka S."/>
            <person name="Chiba Y."/>
            <person name="Ishida S."/>
            <person name="Ono Y."/>
            <person name="Takiguchi S."/>
            <person name="Watanabe S."/>
            <person name="Yosida M."/>
            <person name="Hotuta T."/>
            <person name="Kusano J."/>
            <person name="Kanehori K."/>
            <person name="Takahashi-Fujii A."/>
            <person name="Hara H."/>
            <person name="Tanase T.-O."/>
            <person name="Nomura Y."/>
            <person name="Togiya S."/>
            <person name="Komai F."/>
            <person name="Hara R."/>
            <person name="Takeuchi K."/>
            <person name="Arita M."/>
            <person name="Imose N."/>
            <person name="Musashino K."/>
            <person name="Yuuki H."/>
            <person name="Oshima A."/>
            <person name="Sasaki N."/>
            <person name="Aotsuka S."/>
            <person name="Yoshikawa Y."/>
            <person name="Matsunawa H."/>
            <person name="Ichihara T."/>
            <person name="Shiohata N."/>
            <person name="Sano S."/>
            <person name="Moriya S."/>
            <person name="Momiyama H."/>
            <person name="Satoh N."/>
            <person name="Takami S."/>
            <person name="Terashima Y."/>
            <person name="Suzuki O."/>
            <person name="Nakagawa S."/>
            <person name="Senoh A."/>
            <person name="Mizoguchi H."/>
            <person name="Goto Y."/>
            <person name="Shimizu F."/>
            <person name="Wakebe H."/>
            <person name="Hishigaki H."/>
            <person name="Watanabe T."/>
            <person name="Sugiyama A."/>
            <person name="Takemoto M."/>
            <person name="Kawakami B."/>
            <person name="Yamazaki M."/>
            <person name="Watanabe K."/>
            <person name="Kumagai A."/>
            <person name="Itakura S."/>
            <person name="Fukuzumi Y."/>
            <person name="Fujimori Y."/>
            <person name="Komiyama M."/>
            <person name="Tashiro H."/>
            <person name="Tanigami A."/>
            <person name="Fujiwara T."/>
            <person name="Ono T."/>
            <person name="Yamada K."/>
            <person name="Fujii Y."/>
            <person name="Ozaki K."/>
            <person name="Hirao M."/>
            <person name="Ohmori Y."/>
            <person name="Kawabata A."/>
            <person name="Hikiji T."/>
            <person name="Kobatake N."/>
            <person name="Inagaki H."/>
            <person name="Ikema Y."/>
            <person name="Okamoto S."/>
            <person name="Okitani R."/>
            <person name="Kawakami T."/>
            <person name="Noguchi S."/>
            <person name="Itoh T."/>
            <person name="Shigeta K."/>
            <person name="Senba T."/>
            <person name="Matsumura K."/>
            <person name="Nakajima Y."/>
            <person name="Mizuno T."/>
            <person name="Morinaga M."/>
            <person name="Sasaki M."/>
            <person name="Togashi T."/>
            <person name="Oyama M."/>
            <person name="Hata H."/>
            <person name="Watanabe M."/>
            <person name="Komatsu T."/>
            <person name="Mizushima-Sugano J."/>
            <person name="Satoh T."/>
            <person name="Shirai Y."/>
            <person name="Takahashi Y."/>
            <person name="Nakagawa K."/>
            <person name="Okumura K."/>
            <person name="Nagase T."/>
            <person name="Nomura N."/>
            <person name="Kikuchi H."/>
            <person name="Masuho Y."/>
            <person name="Yamashita R."/>
            <person name="Nakai K."/>
            <person name="Yada T."/>
            <person name="Nakamura Y."/>
            <person name="Ohara O."/>
            <person name="Isogai T."/>
            <person name="Sugano S."/>
        </authorList>
    </citation>
    <scope>NUCLEOTIDE SEQUENCE [LARGE SCALE MRNA] (ISOFORMS MLC1 AND MLC3)</scope>
    <source>
        <tissue>Skeletal muscle</tissue>
    </source>
</reference>
<reference key="5">
    <citation type="submission" date="2005-07" db="EMBL/GenBank/DDBJ databases">
        <authorList>
            <person name="Mural R.J."/>
            <person name="Istrail S."/>
            <person name="Sutton G.G."/>
            <person name="Florea L."/>
            <person name="Halpern A.L."/>
            <person name="Mobarry C.M."/>
            <person name="Lippert R."/>
            <person name="Walenz B."/>
            <person name="Shatkay H."/>
            <person name="Dew I."/>
            <person name="Miller J.R."/>
            <person name="Flanigan M.J."/>
            <person name="Edwards N.J."/>
            <person name="Bolanos R."/>
            <person name="Fasulo D."/>
            <person name="Halldorsson B.V."/>
            <person name="Hannenhalli S."/>
            <person name="Turner R."/>
            <person name="Yooseph S."/>
            <person name="Lu F."/>
            <person name="Nusskern D.R."/>
            <person name="Shue B.C."/>
            <person name="Zheng X.H."/>
            <person name="Zhong F."/>
            <person name="Delcher A.L."/>
            <person name="Huson D.H."/>
            <person name="Kravitz S.A."/>
            <person name="Mouchard L."/>
            <person name="Reinert K."/>
            <person name="Remington K.A."/>
            <person name="Clark A.G."/>
            <person name="Waterman M.S."/>
            <person name="Eichler E.E."/>
            <person name="Adams M.D."/>
            <person name="Hunkapiller M.W."/>
            <person name="Myers E.W."/>
            <person name="Venter J.C."/>
        </authorList>
    </citation>
    <scope>NUCLEOTIDE SEQUENCE [LARGE SCALE GENOMIC DNA]</scope>
</reference>
<reference key="6">
    <citation type="journal article" date="2004" name="Genome Res.">
        <title>The status, quality, and expansion of the NIH full-length cDNA project: the Mammalian Gene Collection (MGC).</title>
        <authorList>
            <consortium name="The MGC Project Team"/>
        </authorList>
    </citation>
    <scope>NUCLEOTIDE SEQUENCE [LARGE SCALE MRNA] (ISOFORM MLC3)</scope>
    <source>
        <tissue>Liver</tissue>
    </source>
</reference>
<reference key="7">
    <citation type="journal article" date="1989" name="J. Biol. Chem.">
        <title>Identification of the functional promoter regions in the human gene encoding the myosin alkali light chains MLC1 and MLC3 of fast skeletal muscle.</title>
        <authorList>
            <person name="Seidel U."/>
            <person name="Arnold H.H."/>
        </authorList>
    </citation>
    <scope>NUCLEOTIDE SEQUENCE [GENOMIC DNA] OF 1-44</scope>
</reference>
<reference key="8">
    <citation type="journal article" date="2018" name="Hum. Mol. Genet.">
        <title>Bi-allelic mutations in MYL1 cause a severe congenital myopathy.</title>
        <authorList>
            <consortium name="UK10K Consortium"/>
            <person name="Ravenscroft G."/>
            <person name="Zaharieva I.T."/>
            <person name="Bortolotti C.A."/>
            <person name="Lambrughi M."/>
            <person name="Pignataro M."/>
            <person name="Borsari M."/>
            <person name="Sewry C.A."/>
            <person name="Phadke R."/>
            <person name="Haliloglu G."/>
            <person name="Ong R."/>
            <person name="Goullee H."/>
            <person name="Whyte T."/>
            <person name="Manzur A."/>
            <person name="Talim B."/>
            <person name="Kaya U."/>
            <person name="Osborn D.P.S."/>
            <person name="Forrest A.R.R."/>
            <person name="Laing N.G."/>
            <person name="Muntoni F."/>
        </authorList>
    </citation>
    <scope>INVOLVEMENT IN CMYO14</scope>
    <scope>FUNCTION</scope>
    <scope>VARIANT CMYO14 ARG-163</scope>
    <scope>CHARACTERIZATION OF VARIANT CMYO14 ARG-163</scope>
</reference>
<proteinExistence type="evidence at protein level"/>
<dbReference type="EMBL" id="X05450">
    <property type="protein sequence ID" value="CAB42646.1"/>
    <property type="molecule type" value="mRNA"/>
</dbReference>
<dbReference type="EMBL" id="X05451">
    <property type="protein sequence ID" value="CAA29020.1"/>
    <property type="molecule type" value="mRNA"/>
</dbReference>
<dbReference type="EMBL" id="M20642">
    <property type="protein sequence ID" value="AAA59854.1"/>
    <property type="molecule type" value="mRNA"/>
</dbReference>
<dbReference type="EMBL" id="M20643">
    <property type="protein sequence ID" value="AAA59855.1"/>
    <property type="molecule type" value="mRNA"/>
</dbReference>
<dbReference type="EMBL" id="CR456869">
    <property type="protein sequence ID" value="CAG33150.1"/>
    <property type="molecule type" value="mRNA"/>
</dbReference>
<dbReference type="EMBL" id="AK311942">
    <property type="protein sequence ID" value="BAG34883.1"/>
    <property type="molecule type" value="mRNA"/>
</dbReference>
<dbReference type="EMBL" id="AK311892">
    <property type="protein sequence ID" value="BAG34833.1"/>
    <property type="molecule type" value="mRNA"/>
</dbReference>
<dbReference type="EMBL" id="CH471063">
    <property type="protein sequence ID" value="EAW70483.1"/>
    <property type="molecule type" value="Genomic_DNA"/>
</dbReference>
<dbReference type="EMBL" id="CH471063">
    <property type="protein sequence ID" value="EAW70484.1"/>
    <property type="molecule type" value="Genomic_DNA"/>
</dbReference>
<dbReference type="EMBL" id="BC005318">
    <property type="protein sequence ID" value="AAH05318.1"/>
    <property type="molecule type" value="mRNA"/>
</dbReference>
<dbReference type="EMBL" id="J05026">
    <property type="protein sequence ID" value="AAA66960.1"/>
    <property type="molecule type" value="Genomic_DNA"/>
</dbReference>
<dbReference type="CCDS" id="CCDS2390.1">
    <molecule id="P05976-1"/>
</dbReference>
<dbReference type="CCDS" id="CCDS2391.1">
    <molecule id="P05976-2"/>
</dbReference>
<dbReference type="PIR" id="JS0431">
    <property type="entry name" value="MOHUA1"/>
</dbReference>
<dbReference type="PIR" id="S07939">
    <property type="entry name" value="MOHUA2"/>
</dbReference>
<dbReference type="RefSeq" id="NP_524144.1">
    <molecule id="P05976-1"/>
    <property type="nucleotide sequence ID" value="NM_079420.3"/>
</dbReference>
<dbReference type="RefSeq" id="NP_524146.1">
    <molecule id="P05976-2"/>
    <property type="nucleotide sequence ID" value="NM_079422.3"/>
</dbReference>
<dbReference type="SMR" id="P05976"/>
<dbReference type="BioGRID" id="110716">
    <property type="interactions" value="63"/>
</dbReference>
<dbReference type="FunCoup" id="P05976">
    <property type="interactions" value="358"/>
</dbReference>
<dbReference type="IntAct" id="P05976">
    <property type="interactions" value="27"/>
</dbReference>
<dbReference type="STRING" id="9606.ENSP00000307280"/>
<dbReference type="GlyGen" id="P05976">
    <property type="glycosylation" value="1 site, 1 O-linked glycan (1 site)"/>
</dbReference>
<dbReference type="iPTMnet" id="P05976"/>
<dbReference type="PhosphoSitePlus" id="P05976"/>
<dbReference type="BioMuta" id="MYL1"/>
<dbReference type="DMDM" id="127128"/>
<dbReference type="jPOST" id="P05976"/>
<dbReference type="MassIVE" id="P05976"/>
<dbReference type="PaxDb" id="9606-ENSP00000307280"/>
<dbReference type="PeptideAtlas" id="P05976"/>
<dbReference type="ProteomicsDB" id="51863">
    <molecule id="P05976-1"/>
</dbReference>
<dbReference type="ProteomicsDB" id="51864">
    <molecule id="P05976-2"/>
</dbReference>
<dbReference type="Pumba" id="P05976"/>
<dbReference type="Antibodypedia" id="20019">
    <property type="antibodies" value="223 antibodies from 27 providers"/>
</dbReference>
<dbReference type="DNASU" id="4632"/>
<dbReference type="Ensembl" id="ENST00000341685.8">
    <molecule id="P05976-2"/>
    <property type="protein sequence ID" value="ENSP00000343321.4"/>
    <property type="gene ID" value="ENSG00000168530.16"/>
</dbReference>
<dbReference type="Ensembl" id="ENST00000352451.4">
    <molecule id="P05976-1"/>
    <property type="protein sequence ID" value="ENSP00000307280.4"/>
    <property type="gene ID" value="ENSG00000168530.16"/>
</dbReference>
<dbReference type="GeneID" id="4632"/>
<dbReference type="KEGG" id="hsa:4632"/>
<dbReference type="MANE-Select" id="ENST00000352451.4">
    <property type="protein sequence ID" value="ENSP00000307280.4"/>
    <property type="RefSeq nucleotide sequence ID" value="NM_079420.3"/>
    <property type="RefSeq protein sequence ID" value="NP_524144.1"/>
</dbReference>
<dbReference type="UCSC" id="uc002veb.4">
    <molecule id="P05976-1"/>
    <property type="organism name" value="human"/>
</dbReference>
<dbReference type="AGR" id="HGNC:7582"/>
<dbReference type="CTD" id="4632"/>
<dbReference type="DisGeNET" id="4632"/>
<dbReference type="GeneCards" id="MYL1"/>
<dbReference type="HGNC" id="HGNC:7582">
    <property type="gene designation" value="MYL1"/>
</dbReference>
<dbReference type="HPA" id="ENSG00000168530">
    <property type="expression patterns" value="Group enriched (skeletal muscle, tongue)"/>
</dbReference>
<dbReference type="MalaCards" id="MYL1"/>
<dbReference type="MIM" id="160780">
    <property type="type" value="gene"/>
</dbReference>
<dbReference type="MIM" id="618414">
    <property type="type" value="phenotype"/>
</dbReference>
<dbReference type="neXtProt" id="NX_P05976"/>
<dbReference type="OpenTargets" id="ENSG00000168530"/>
<dbReference type="Orphanet" id="544602">
    <property type="disease" value="Congenital myopathy with reduced type 2 muscle fibers"/>
</dbReference>
<dbReference type="PharmGKB" id="PA31379"/>
<dbReference type="VEuPathDB" id="HostDB:ENSG00000168530"/>
<dbReference type="eggNOG" id="KOG0030">
    <property type="taxonomic scope" value="Eukaryota"/>
</dbReference>
<dbReference type="GeneTree" id="ENSGT01030000234570"/>
<dbReference type="HOGENOM" id="CLU_061288_13_0_1"/>
<dbReference type="InParanoid" id="P05976"/>
<dbReference type="OMA" id="NPTNEEM"/>
<dbReference type="OrthoDB" id="5959761at2759"/>
<dbReference type="PAN-GO" id="P05976">
    <property type="GO annotations" value="2 GO annotations based on evolutionary models"/>
</dbReference>
<dbReference type="PhylomeDB" id="P05976"/>
<dbReference type="TreeFam" id="TF351553"/>
<dbReference type="PathwayCommons" id="P05976"/>
<dbReference type="Reactome" id="R-HSA-390522">
    <property type="pathway name" value="Striated Muscle Contraction"/>
</dbReference>
<dbReference type="SignaLink" id="P05976"/>
<dbReference type="SIGNOR" id="P05976"/>
<dbReference type="BioGRID-ORCS" id="4632">
    <property type="hits" value="12 hits in 1144 CRISPR screens"/>
</dbReference>
<dbReference type="ChiTaRS" id="MYL1">
    <property type="organism name" value="human"/>
</dbReference>
<dbReference type="GeneWiki" id="MYL1"/>
<dbReference type="GenomeRNAi" id="4632"/>
<dbReference type="Pharos" id="P05976">
    <property type="development level" value="Tbio"/>
</dbReference>
<dbReference type="PRO" id="PR:P05976"/>
<dbReference type="Proteomes" id="UP000005640">
    <property type="component" value="Chromosome 2"/>
</dbReference>
<dbReference type="RNAct" id="P05976">
    <property type="molecule type" value="protein"/>
</dbReference>
<dbReference type="Bgee" id="ENSG00000168530">
    <property type="expression patterns" value="Expressed in skeletal muscle tissue of biceps brachii and 108 other cell types or tissues"/>
</dbReference>
<dbReference type="GO" id="GO:0043292">
    <property type="term" value="C:contractile muscle fiber"/>
    <property type="evidence" value="ECO:0000318"/>
    <property type="project" value="GO_Central"/>
</dbReference>
<dbReference type="GO" id="GO:0005829">
    <property type="term" value="C:cytosol"/>
    <property type="evidence" value="ECO:0000304"/>
    <property type="project" value="Reactome"/>
</dbReference>
<dbReference type="GO" id="GO:0005859">
    <property type="term" value="C:muscle myosin complex"/>
    <property type="evidence" value="ECO:0000303"/>
    <property type="project" value="BHF-UCL"/>
</dbReference>
<dbReference type="GO" id="GO:0030016">
    <property type="term" value="C:myofibril"/>
    <property type="evidence" value="ECO:0000314"/>
    <property type="project" value="BHF-UCL"/>
</dbReference>
<dbReference type="GO" id="GO:0016460">
    <property type="term" value="C:myosin II complex"/>
    <property type="evidence" value="ECO:0000318"/>
    <property type="project" value="GO_Central"/>
</dbReference>
<dbReference type="GO" id="GO:0030017">
    <property type="term" value="C:sarcomere"/>
    <property type="evidence" value="ECO:0000303"/>
    <property type="project" value="BHF-UCL"/>
</dbReference>
<dbReference type="GO" id="GO:0005509">
    <property type="term" value="F:calcium ion binding"/>
    <property type="evidence" value="ECO:0007669"/>
    <property type="project" value="InterPro"/>
</dbReference>
<dbReference type="GO" id="GO:0008307">
    <property type="term" value="F:structural constituent of muscle"/>
    <property type="evidence" value="ECO:0000315"/>
    <property type="project" value="UniProtKB"/>
</dbReference>
<dbReference type="GO" id="GO:0006936">
    <property type="term" value="P:muscle contraction"/>
    <property type="evidence" value="ECO:0000314"/>
    <property type="project" value="BHF-UCL"/>
</dbReference>
<dbReference type="GO" id="GO:0030049">
    <property type="term" value="P:muscle filament sliding"/>
    <property type="evidence" value="ECO:0000303"/>
    <property type="project" value="BHF-UCL"/>
</dbReference>
<dbReference type="CDD" id="cd00051">
    <property type="entry name" value="EFh"/>
    <property type="match status" value="1"/>
</dbReference>
<dbReference type="FunFam" id="1.10.238.10:FF:000019">
    <property type="entry name" value="Myosin light chain 1 skeletal"/>
    <property type="match status" value="1"/>
</dbReference>
<dbReference type="FunFam" id="1.10.238.10:FF:000056">
    <property type="entry name" value="Myosin light chain 1 skeletal"/>
    <property type="match status" value="1"/>
</dbReference>
<dbReference type="Gene3D" id="1.10.238.10">
    <property type="entry name" value="EF-hand"/>
    <property type="match status" value="2"/>
</dbReference>
<dbReference type="InterPro" id="IPR050230">
    <property type="entry name" value="CALM/Myosin/TropC-like"/>
</dbReference>
<dbReference type="InterPro" id="IPR011992">
    <property type="entry name" value="EF-hand-dom_pair"/>
</dbReference>
<dbReference type="InterPro" id="IPR002048">
    <property type="entry name" value="EF_hand_dom"/>
</dbReference>
<dbReference type="PANTHER" id="PTHR23048">
    <property type="entry name" value="MYOSIN LIGHT CHAIN 1, 3"/>
    <property type="match status" value="1"/>
</dbReference>
<dbReference type="PANTHER" id="PTHR23048:SF3">
    <property type="entry name" value="MYOSIN LIGHT CHAIN 1_3, SKELETAL MUSCLE ISOFORM"/>
    <property type="match status" value="1"/>
</dbReference>
<dbReference type="SMART" id="SM00054">
    <property type="entry name" value="EFh"/>
    <property type="match status" value="2"/>
</dbReference>
<dbReference type="SUPFAM" id="SSF47473">
    <property type="entry name" value="EF-hand"/>
    <property type="match status" value="1"/>
</dbReference>
<dbReference type="PROSITE" id="PS50222">
    <property type="entry name" value="EF_HAND_2"/>
    <property type="match status" value="3"/>
</dbReference>
<sequence length="194" mass="21145">MAPKKDVKKPVAAAAAAPAPAPAPAPAPAPAKPKEEKIDLSAIKIEFSKEQQDEFKEAFLLFDRTGDSKITLSQVGDVLRALGTNPTNAEVRKVLGNPSNEELNAKKIEFEQFLPMMQAISNNKDQATYEDFVEGLRVFDKEGNGTVMGAELRHVLATLGEKMKEEEVEALMAGQEDSNGCINYEAFVKHIMSI</sequence>
<feature type="initiator methionine" description="Removed" evidence="3">
    <location>
        <position position="1"/>
    </location>
</feature>
<feature type="chain" id="PRO_0000198681" description="Myosin light chain 1/3, skeletal muscle isoform">
    <location>
        <begin position="2"/>
        <end position="194"/>
    </location>
</feature>
<feature type="domain" description="EF-hand 1" evidence="4">
    <location>
        <begin position="50"/>
        <end position="85"/>
    </location>
</feature>
<feature type="domain" description="EF-hand 2" evidence="4">
    <location>
        <begin position="127"/>
        <end position="162"/>
    </location>
</feature>
<feature type="domain" description="EF-hand 3" evidence="4">
    <location>
        <begin position="162"/>
        <end position="194"/>
    </location>
</feature>
<feature type="region of interest" description="Disordered" evidence="5">
    <location>
        <begin position="1"/>
        <end position="35"/>
    </location>
</feature>
<feature type="compositionally biased region" description="Pro residues" evidence="5">
    <location>
        <begin position="19"/>
        <end position="31"/>
    </location>
</feature>
<feature type="modified residue" description="N,N,N-trimethylalanine" evidence="3">
    <location>
        <position position="2"/>
    </location>
</feature>
<feature type="modified residue" description="Phosphothreonine" evidence="2">
    <location>
        <position position="71"/>
    </location>
</feature>
<feature type="modified residue" description="Phosphoserine" evidence="2">
    <location>
        <position position="73"/>
    </location>
</feature>
<feature type="modified residue" description="Phosphothreonine" evidence="2">
    <location>
        <position position="87"/>
    </location>
</feature>
<feature type="modified residue" description="Phosphoserine" evidence="2">
    <location>
        <position position="99"/>
    </location>
</feature>
<feature type="splice variant" id="VSP_038686" description="In isoform MLC3." evidence="7 8 9 10">
    <original>MAPKKDVKKPVAAAAAAPAPAPAPAPAPAPAKPKEEKIDLSAIKIEFSKEQQD</original>
    <variation>MSFSADQIA</variation>
    <location>
        <begin position="1"/>
        <end position="53"/>
    </location>
</feature>
<feature type="sequence variant" id="VAR_082312" description="In CMYO14; no protein detected by western blot in patient muscle; dbSNP:rs1259220084." evidence="6">
    <original>M</original>
    <variation>R</variation>
    <location>
        <position position="163"/>
    </location>
</feature>
<feature type="sequence conflict" description="In Ref. 1; CAB42646." evidence="11" ref="1">
    <original>I</original>
    <variation>M</variation>
    <location>
        <position position="45"/>
    </location>
</feature>
<feature type="initiator methionine" description="Removed" evidence="11">
    <location sequence="P05976-2">
        <position position="1"/>
    </location>
</feature>
<feature type="modified residue" description="N-acetylalanine" evidence="11">
    <location sequence="P05976-2">
        <position position="2"/>
    </location>
</feature>
<protein>
    <recommendedName>
        <fullName>Myosin light chain 1/3, skeletal muscle isoform</fullName>
        <shortName>MLC1/MLC3</shortName>
        <shortName>MLC1F/MLC3F</shortName>
    </recommendedName>
    <alternativeName>
        <fullName>Myosin light chain alkali 1/2</fullName>
        <shortName>Myosin light chain A1/A2</shortName>
    </alternativeName>
</protein>
<name>MYL1_HUMAN</name>
<evidence type="ECO:0000250" key="1"/>
<evidence type="ECO:0000250" key="2">
    <source>
        <dbReference type="UniProtKB" id="P02600"/>
    </source>
</evidence>
<evidence type="ECO:0000250" key="3">
    <source>
        <dbReference type="UniProtKB" id="P02602"/>
    </source>
</evidence>
<evidence type="ECO:0000255" key="4">
    <source>
        <dbReference type="PROSITE-ProRule" id="PRU00448"/>
    </source>
</evidence>
<evidence type="ECO:0000256" key="5">
    <source>
        <dbReference type="SAM" id="MobiDB-lite"/>
    </source>
</evidence>
<evidence type="ECO:0000269" key="6">
    <source>
    </source>
</evidence>
<evidence type="ECO:0000303" key="7">
    <source>
    </source>
</evidence>
<evidence type="ECO:0000303" key="8">
    <source>
    </source>
</evidence>
<evidence type="ECO:0000303" key="9">
    <source>
    </source>
</evidence>
<evidence type="ECO:0000303" key="10">
    <source>
    </source>
</evidence>
<evidence type="ECO:0000305" key="11"/>